<name>SOG_DROME</name>
<keyword id="KW-1003">Cell membrane</keyword>
<keyword id="KW-0217">Developmental protein</keyword>
<keyword id="KW-0325">Glycoprotein</keyword>
<keyword id="KW-0333">Golgi apparatus</keyword>
<keyword id="KW-0339">Growth factor</keyword>
<keyword id="KW-0341">Growth regulation</keyword>
<keyword id="KW-0449">Lipoprotein</keyword>
<keyword id="KW-0472">Membrane</keyword>
<keyword id="KW-0564">Palmitate</keyword>
<keyword id="KW-1185">Reference proteome</keyword>
<keyword id="KW-0677">Repeat</keyword>
<keyword id="KW-0964">Secreted</keyword>
<keyword id="KW-0735">Signal-anchor</keyword>
<keyword id="KW-0812">Transmembrane</keyword>
<keyword id="KW-1133">Transmembrane helix</keyword>
<organism>
    <name type="scientific">Drosophila melanogaster</name>
    <name type="common">Fruit fly</name>
    <dbReference type="NCBI Taxonomy" id="7227"/>
    <lineage>
        <taxon>Eukaryota</taxon>
        <taxon>Metazoa</taxon>
        <taxon>Ecdysozoa</taxon>
        <taxon>Arthropoda</taxon>
        <taxon>Hexapoda</taxon>
        <taxon>Insecta</taxon>
        <taxon>Pterygota</taxon>
        <taxon>Neoptera</taxon>
        <taxon>Endopterygota</taxon>
        <taxon>Diptera</taxon>
        <taxon>Brachycera</taxon>
        <taxon>Muscomorpha</taxon>
        <taxon>Ephydroidea</taxon>
        <taxon>Drosophilidae</taxon>
        <taxon>Drosophila</taxon>
        <taxon>Sophophora</taxon>
    </lineage>
</organism>
<reference key="1">
    <citation type="journal article" date="1994" name="Genes Dev.">
        <title>Dorsal-ventral patterning of the Drosophila embryo depends on a putative negative growth factor encoded by the short gastrulation gene.</title>
        <authorList>
            <person name="Francois V."/>
            <person name="Solloway M."/>
            <person name="O'Neill J.W."/>
            <person name="Emery J."/>
            <person name="Bier E."/>
        </authorList>
    </citation>
    <scope>NUCLEOTIDE SEQUENCE [MRNA]</scope>
    <scope>FUNCTION</scope>
    <scope>TISSUE SPECIFICITY</scope>
    <scope>DEVELOPMENTAL STAGE</scope>
</reference>
<reference key="2">
    <citation type="journal article" date="2000" name="Science">
        <title>The genome sequence of Drosophila melanogaster.</title>
        <authorList>
            <person name="Adams M.D."/>
            <person name="Celniker S.E."/>
            <person name="Holt R.A."/>
            <person name="Evans C.A."/>
            <person name="Gocayne J.D."/>
            <person name="Amanatides P.G."/>
            <person name="Scherer S.E."/>
            <person name="Li P.W."/>
            <person name="Hoskins R.A."/>
            <person name="Galle R.F."/>
            <person name="George R.A."/>
            <person name="Lewis S.E."/>
            <person name="Richards S."/>
            <person name="Ashburner M."/>
            <person name="Henderson S.N."/>
            <person name="Sutton G.G."/>
            <person name="Wortman J.R."/>
            <person name="Yandell M.D."/>
            <person name="Zhang Q."/>
            <person name="Chen L.X."/>
            <person name="Brandon R.C."/>
            <person name="Rogers Y.-H.C."/>
            <person name="Blazej R.G."/>
            <person name="Champe M."/>
            <person name="Pfeiffer B.D."/>
            <person name="Wan K.H."/>
            <person name="Doyle C."/>
            <person name="Baxter E.G."/>
            <person name="Helt G."/>
            <person name="Nelson C.R."/>
            <person name="Miklos G.L.G."/>
            <person name="Abril J.F."/>
            <person name="Agbayani A."/>
            <person name="An H.-J."/>
            <person name="Andrews-Pfannkoch C."/>
            <person name="Baldwin D."/>
            <person name="Ballew R.M."/>
            <person name="Basu A."/>
            <person name="Baxendale J."/>
            <person name="Bayraktaroglu L."/>
            <person name="Beasley E.M."/>
            <person name="Beeson K.Y."/>
            <person name="Benos P.V."/>
            <person name="Berman B.P."/>
            <person name="Bhandari D."/>
            <person name="Bolshakov S."/>
            <person name="Borkova D."/>
            <person name="Botchan M.R."/>
            <person name="Bouck J."/>
            <person name="Brokstein P."/>
            <person name="Brottier P."/>
            <person name="Burtis K.C."/>
            <person name="Busam D.A."/>
            <person name="Butler H."/>
            <person name="Cadieu E."/>
            <person name="Center A."/>
            <person name="Chandra I."/>
            <person name="Cherry J.M."/>
            <person name="Cawley S."/>
            <person name="Dahlke C."/>
            <person name="Davenport L.B."/>
            <person name="Davies P."/>
            <person name="de Pablos B."/>
            <person name="Delcher A."/>
            <person name="Deng Z."/>
            <person name="Mays A.D."/>
            <person name="Dew I."/>
            <person name="Dietz S.M."/>
            <person name="Dodson K."/>
            <person name="Doup L.E."/>
            <person name="Downes M."/>
            <person name="Dugan-Rocha S."/>
            <person name="Dunkov B.C."/>
            <person name="Dunn P."/>
            <person name="Durbin K.J."/>
            <person name="Evangelista C.C."/>
            <person name="Ferraz C."/>
            <person name="Ferriera S."/>
            <person name="Fleischmann W."/>
            <person name="Fosler C."/>
            <person name="Gabrielian A.E."/>
            <person name="Garg N.S."/>
            <person name="Gelbart W.M."/>
            <person name="Glasser K."/>
            <person name="Glodek A."/>
            <person name="Gong F."/>
            <person name="Gorrell J.H."/>
            <person name="Gu Z."/>
            <person name="Guan P."/>
            <person name="Harris M."/>
            <person name="Harris N.L."/>
            <person name="Harvey D.A."/>
            <person name="Heiman T.J."/>
            <person name="Hernandez J.R."/>
            <person name="Houck J."/>
            <person name="Hostin D."/>
            <person name="Houston K.A."/>
            <person name="Howland T.J."/>
            <person name="Wei M.-H."/>
            <person name="Ibegwam C."/>
            <person name="Jalali M."/>
            <person name="Kalush F."/>
            <person name="Karpen G.H."/>
            <person name="Ke Z."/>
            <person name="Kennison J.A."/>
            <person name="Ketchum K.A."/>
            <person name="Kimmel B.E."/>
            <person name="Kodira C.D."/>
            <person name="Kraft C.L."/>
            <person name="Kravitz S."/>
            <person name="Kulp D."/>
            <person name="Lai Z."/>
            <person name="Lasko P."/>
            <person name="Lei Y."/>
            <person name="Levitsky A.A."/>
            <person name="Li J.H."/>
            <person name="Li Z."/>
            <person name="Liang Y."/>
            <person name="Lin X."/>
            <person name="Liu X."/>
            <person name="Mattei B."/>
            <person name="McIntosh T.C."/>
            <person name="McLeod M.P."/>
            <person name="McPherson D."/>
            <person name="Merkulov G."/>
            <person name="Milshina N.V."/>
            <person name="Mobarry C."/>
            <person name="Morris J."/>
            <person name="Moshrefi A."/>
            <person name="Mount S.M."/>
            <person name="Moy M."/>
            <person name="Murphy B."/>
            <person name="Murphy L."/>
            <person name="Muzny D.M."/>
            <person name="Nelson D.L."/>
            <person name="Nelson D.R."/>
            <person name="Nelson K.A."/>
            <person name="Nixon K."/>
            <person name="Nusskern D.R."/>
            <person name="Pacleb J.M."/>
            <person name="Palazzolo M."/>
            <person name="Pittman G.S."/>
            <person name="Pan S."/>
            <person name="Pollard J."/>
            <person name="Puri V."/>
            <person name="Reese M.G."/>
            <person name="Reinert K."/>
            <person name="Remington K."/>
            <person name="Saunders R.D.C."/>
            <person name="Scheeler F."/>
            <person name="Shen H."/>
            <person name="Shue B.C."/>
            <person name="Siden-Kiamos I."/>
            <person name="Simpson M."/>
            <person name="Skupski M.P."/>
            <person name="Smith T.J."/>
            <person name="Spier E."/>
            <person name="Spradling A.C."/>
            <person name="Stapleton M."/>
            <person name="Strong R."/>
            <person name="Sun E."/>
            <person name="Svirskas R."/>
            <person name="Tector C."/>
            <person name="Turner R."/>
            <person name="Venter E."/>
            <person name="Wang A.H."/>
            <person name="Wang X."/>
            <person name="Wang Z.-Y."/>
            <person name="Wassarman D.A."/>
            <person name="Weinstock G.M."/>
            <person name="Weissenbach J."/>
            <person name="Williams S.M."/>
            <person name="Woodage T."/>
            <person name="Worley K.C."/>
            <person name="Wu D."/>
            <person name="Yang S."/>
            <person name="Yao Q.A."/>
            <person name="Ye J."/>
            <person name="Yeh R.-F."/>
            <person name="Zaveri J.S."/>
            <person name="Zhan M."/>
            <person name="Zhang G."/>
            <person name="Zhao Q."/>
            <person name="Zheng L."/>
            <person name="Zheng X.H."/>
            <person name="Zhong F.N."/>
            <person name="Zhong W."/>
            <person name="Zhou X."/>
            <person name="Zhu S.C."/>
            <person name="Zhu X."/>
            <person name="Smith H.O."/>
            <person name="Gibbs R.A."/>
            <person name="Myers E.W."/>
            <person name="Rubin G.M."/>
            <person name="Venter J.C."/>
        </authorList>
    </citation>
    <scope>NUCLEOTIDE SEQUENCE [LARGE SCALE GENOMIC DNA]</scope>
    <source>
        <strain>Berkeley</strain>
    </source>
</reference>
<reference key="3">
    <citation type="journal article" date="2002" name="Genome Biol.">
        <title>Annotation of the Drosophila melanogaster euchromatic genome: a systematic review.</title>
        <authorList>
            <person name="Misra S."/>
            <person name="Crosby M.A."/>
            <person name="Mungall C.J."/>
            <person name="Matthews B.B."/>
            <person name="Campbell K.S."/>
            <person name="Hradecky P."/>
            <person name="Huang Y."/>
            <person name="Kaminker J.S."/>
            <person name="Millburn G.H."/>
            <person name="Prochnik S.E."/>
            <person name="Smith C.D."/>
            <person name="Tupy J.L."/>
            <person name="Whitfield E.J."/>
            <person name="Bayraktaroglu L."/>
            <person name="Berman B.P."/>
            <person name="Bettencourt B.R."/>
            <person name="Celniker S.E."/>
            <person name="de Grey A.D.N.J."/>
            <person name="Drysdale R.A."/>
            <person name="Harris N.L."/>
            <person name="Richter J."/>
            <person name="Russo S."/>
            <person name="Schroeder A.J."/>
            <person name="Shu S.Q."/>
            <person name="Stapleton M."/>
            <person name="Yamada C."/>
            <person name="Ashburner M."/>
            <person name="Gelbart W.M."/>
            <person name="Rubin G.M."/>
            <person name="Lewis S.E."/>
        </authorList>
    </citation>
    <scope>GENOME REANNOTATION</scope>
    <source>
        <strain>Berkeley</strain>
    </source>
</reference>
<reference key="4">
    <citation type="submission" date="2008-12" db="EMBL/GenBank/DDBJ databases">
        <authorList>
            <person name="Carlson J.W."/>
            <person name="Booth B."/>
            <person name="Frise E."/>
            <person name="Park S."/>
            <person name="Wan K.H."/>
            <person name="Yu C."/>
            <person name="Celniker S.E."/>
        </authorList>
    </citation>
    <scope>NUCLEOTIDE SEQUENCE [LARGE SCALE MRNA]</scope>
    <source>
        <strain>Berkeley</strain>
    </source>
</reference>
<reference key="5">
    <citation type="journal article" date="2001" name="Nature">
        <title>Twisted gastrulation is a conserved extracellular BMP antagonist.</title>
        <authorList>
            <person name="Ross J.J."/>
            <person name="Shimmi O."/>
            <person name="Vilmos P."/>
            <person name="Petryk A."/>
            <person name="Kim H."/>
            <person name="Gaudenz K."/>
            <person name="Hermanson S."/>
            <person name="Ekker S.C."/>
            <person name="O'Connor M.B."/>
            <person name="Marsh J.L."/>
        </authorList>
    </citation>
    <scope>FUNCTION</scope>
    <scope>INTERACTION WITH DPP AND TSG</scope>
</reference>
<reference key="6">
    <citation type="journal article" date="2005" name="Development">
        <title>Matching catalytic activity to developmental function: tolloid-related processes Sog in order to help specify the posterior crossvein in the Drosophila wing.</title>
        <authorList>
            <person name="Serpe M."/>
            <person name="Ralston A."/>
            <person name="Blair S.S."/>
            <person name="O'Connor M.B."/>
        </authorList>
    </citation>
    <scope>FUNCTION</scope>
    <scope>PROTEOLYTIC CLEAVAGE</scope>
</reference>
<reference key="7">
    <citation type="journal article" date="2010" name="Dev. Biol.">
        <title>dHIP14-dependent palmitoylation promotes secretion of the BMP antagonist Sog.</title>
        <authorList>
            <person name="Kang K.H."/>
            <person name="Bier E."/>
        </authorList>
    </citation>
    <scope>INTERACTION WITH HIP14</scope>
    <scope>SUBCELLULAR LOCATION</scope>
    <scope>PALMITOYLATION</scope>
    <scope>MUTAGENESIS OF CYS-27 AND CYS-28</scope>
</reference>
<dbReference type="EMBL" id="U18774">
    <property type="protein sequence ID" value="AAA89117.1"/>
    <property type="molecule type" value="mRNA"/>
</dbReference>
<dbReference type="EMBL" id="AE014298">
    <property type="protein sequence ID" value="AAF48481.1"/>
    <property type="molecule type" value="Genomic_DNA"/>
</dbReference>
<dbReference type="EMBL" id="BT053679">
    <property type="protein sequence ID" value="ACK77594.1"/>
    <property type="molecule type" value="mRNA"/>
</dbReference>
<dbReference type="PIR" id="T13177">
    <property type="entry name" value="T13177"/>
</dbReference>
<dbReference type="RefSeq" id="NP_001259576.1">
    <property type="nucleotide sequence ID" value="NM_001272647.2"/>
</dbReference>
<dbReference type="RefSeq" id="NP_001259578.1">
    <property type="nucleotide sequence ID" value="NM_001272649.2"/>
</dbReference>
<dbReference type="RefSeq" id="NP_476736.1">
    <property type="nucleotide sequence ID" value="NM_057388.4"/>
</dbReference>
<dbReference type="BioGRID" id="58848">
    <property type="interactions" value="30"/>
</dbReference>
<dbReference type="DIP" id="DIP-20760N"/>
<dbReference type="FunCoup" id="Q24025">
    <property type="interactions" value="133"/>
</dbReference>
<dbReference type="IntAct" id="Q24025">
    <property type="interactions" value="5"/>
</dbReference>
<dbReference type="STRING" id="7227.FBpp0309304"/>
<dbReference type="GlyCosmos" id="Q24025">
    <property type="glycosylation" value="6 sites, No reported glycans"/>
</dbReference>
<dbReference type="GlyGen" id="Q24025">
    <property type="glycosylation" value="6 sites"/>
</dbReference>
<dbReference type="PaxDb" id="7227-FBpp0304150"/>
<dbReference type="DNASU" id="32498"/>
<dbReference type="EnsemblMetazoa" id="FBtr0074063">
    <property type="protein sequence ID" value="FBpp0073879"/>
    <property type="gene ID" value="FBgn0003463"/>
</dbReference>
<dbReference type="EnsemblMetazoa" id="FBtr0331760">
    <property type="protein sequence ID" value="FBpp0304148"/>
    <property type="gene ID" value="FBgn0003463"/>
</dbReference>
<dbReference type="EnsemblMetazoa" id="FBtr0340346">
    <property type="protein sequence ID" value="FBpp0309304"/>
    <property type="gene ID" value="FBgn0003463"/>
</dbReference>
<dbReference type="GeneID" id="32498"/>
<dbReference type="KEGG" id="dme:Dmel_CG9224"/>
<dbReference type="AGR" id="FB:FBgn0003463"/>
<dbReference type="CTD" id="32498"/>
<dbReference type="FlyBase" id="FBgn0003463">
    <property type="gene designation" value="sog"/>
</dbReference>
<dbReference type="VEuPathDB" id="VectorBase:FBgn0003463"/>
<dbReference type="eggNOG" id="ENOG502QR4J">
    <property type="taxonomic scope" value="Eukaryota"/>
</dbReference>
<dbReference type="HOGENOM" id="CLU_008477_0_0_1"/>
<dbReference type="InParanoid" id="Q24025"/>
<dbReference type="OMA" id="TGRFTFH"/>
<dbReference type="OrthoDB" id="9829321at2759"/>
<dbReference type="PhylomeDB" id="Q24025"/>
<dbReference type="SignaLink" id="Q24025"/>
<dbReference type="BioGRID-ORCS" id="32498">
    <property type="hits" value="0 hits in 3 CRISPR screens"/>
</dbReference>
<dbReference type="GenomeRNAi" id="32498"/>
<dbReference type="PRO" id="PR:Q24025"/>
<dbReference type="Proteomes" id="UP000000803">
    <property type="component" value="Chromosome X"/>
</dbReference>
<dbReference type="Bgee" id="FBgn0003463">
    <property type="expression patterns" value="Expressed in adult tracheocyte (Drosophila) in open tracheal system trachea and 211 other cell types or tissues"/>
</dbReference>
<dbReference type="ExpressionAtlas" id="Q24025">
    <property type="expression patterns" value="baseline and differential"/>
</dbReference>
<dbReference type="GO" id="GO:0005615">
    <property type="term" value="C:extracellular space"/>
    <property type="evidence" value="ECO:0000314"/>
    <property type="project" value="FlyBase"/>
</dbReference>
<dbReference type="GO" id="GO:0000139">
    <property type="term" value="C:Golgi membrane"/>
    <property type="evidence" value="ECO:0007669"/>
    <property type="project" value="UniProtKB-SubCell"/>
</dbReference>
<dbReference type="GO" id="GO:0005886">
    <property type="term" value="C:plasma membrane"/>
    <property type="evidence" value="ECO:0007669"/>
    <property type="project" value="UniProtKB-SubCell"/>
</dbReference>
<dbReference type="GO" id="GO:0036122">
    <property type="term" value="F:BMP binding"/>
    <property type="evidence" value="ECO:0000314"/>
    <property type="project" value="FlyBase"/>
</dbReference>
<dbReference type="GO" id="GO:0005518">
    <property type="term" value="F:collagen binding"/>
    <property type="evidence" value="ECO:0000314"/>
    <property type="project" value="FlyBase"/>
</dbReference>
<dbReference type="GO" id="GO:0008083">
    <property type="term" value="F:growth factor activity"/>
    <property type="evidence" value="ECO:0007669"/>
    <property type="project" value="UniProtKB-KW"/>
</dbReference>
<dbReference type="GO" id="GO:0140311">
    <property type="term" value="F:protein sequestering activity"/>
    <property type="evidence" value="ECO:0000314"/>
    <property type="project" value="FlyBase"/>
</dbReference>
<dbReference type="GO" id="GO:0007378">
    <property type="term" value="P:amnioserosa formation"/>
    <property type="evidence" value="ECO:0000315"/>
    <property type="project" value="FlyBase"/>
</dbReference>
<dbReference type="GO" id="GO:0009953">
    <property type="term" value="P:dorsal/ventral pattern formation"/>
    <property type="evidence" value="ECO:0000318"/>
    <property type="project" value="GO_Central"/>
</dbReference>
<dbReference type="GO" id="GO:0035592">
    <property type="term" value="P:establishment of protein localization to extracellular region"/>
    <property type="evidence" value="ECO:0000315"/>
    <property type="project" value="FlyBase"/>
</dbReference>
<dbReference type="GO" id="GO:0008586">
    <property type="term" value="P:imaginal disc-derived wing vein morphogenesis"/>
    <property type="evidence" value="ECO:0000315"/>
    <property type="project" value="FlyBase"/>
</dbReference>
<dbReference type="GO" id="GO:0007313">
    <property type="term" value="P:maternal specification of dorsal/ventral axis, oocyte, soma encoded"/>
    <property type="evidence" value="ECO:0000315"/>
    <property type="project" value="FlyBase"/>
</dbReference>
<dbReference type="GO" id="GO:0030514">
    <property type="term" value="P:negative regulation of BMP signaling pathway"/>
    <property type="evidence" value="ECO:0000314"/>
    <property type="project" value="FlyBase"/>
</dbReference>
<dbReference type="GO" id="GO:0030513">
    <property type="term" value="P:positive regulation of BMP signaling pathway"/>
    <property type="evidence" value="ECO:0000315"/>
    <property type="project" value="FlyBase"/>
</dbReference>
<dbReference type="GO" id="GO:0061328">
    <property type="term" value="P:posterior Malpighian tubule development"/>
    <property type="evidence" value="ECO:0000315"/>
    <property type="project" value="FlyBase"/>
</dbReference>
<dbReference type="GO" id="GO:0110107">
    <property type="term" value="P:regulation of imaginal disc-derived wing vein specification"/>
    <property type="evidence" value="ECO:0000315"/>
    <property type="project" value="FlyBase"/>
</dbReference>
<dbReference type="GO" id="GO:0035271">
    <property type="term" value="P:ring gland development"/>
    <property type="evidence" value="ECO:0000315"/>
    <property type="project" value="FlyBase"/>
</dbReference>
<dbReference type="Gene3D" id="6.20.200.20">
    <property type="match status" value="1"/>
</dbReference>
<dbReference type="InterPro" id="IPR016353">
    <property type="entry name" value="Chordin"/>
</dbReference>
<dbReference type="InterPro" id="IPR052278">
    <property type="entry name" value="Chordin-like_regulators"/>
</dbReference>
<dbReference type="InterPro" id="IPR010895">
    <property type="entry name" value="CHRD"/>
</dbReference>
<dbReference type="InterPro" id="IPR001007">
    <property type="entry name" value="VWF_dom"/>
</dbReference>
<dbReference type="PANTHER" id="PTHR46526">
    <property type="entry name" value="CHORDIN"/>
    <property type="match status" value="1"/>
</dbReference>
<dbReference type="PANTHER" id="PTHR46526:SF1">
    <property type="entry name" value="CHORDIN"/>
    <property type="match status" value="1"/>
</dbReference>
<dbReference type="Pfam" id="PF07452">
    <property type="entry name" value="CHRD"/>
    <property type="match status" value="2"/>
</dbReference>
<dbReference type="Pfam" id="PF00093">
    <property type="entry name" value="VWC"/>
    <property type="match status" value="4"/>
</dbReference>
<dbReference type="PIRSF" id="PIRSF002496">
    <property type="entry name" value="Chordin"/>
    <property type="match status" value="1"/>
</dbReference>
<dbReference type="SMART" id="SM00754">
    <property type="entry name" value="CHRD"/>
    <property type="match status" value="4"/>
</dbReference>
<dbReference type="SMART" id="SM00214">
    <property type="entry name" value="VWC"/>
    <property type="match status" value="4"/>
</dbReference>
<dbReference type="SUPFAM" id="SSF57603">
    <property type="entry name" value="FnI-like domain"/>
    <property type="match status" value="4"/>
</dbReference>
<dbReference type="PROSITE" id="PS50933">
    <property type="entry name" value="CHRD"/>
    <property type="match status" value="4"/>
</dbReference>
<dbReference type="PROSITE" id="PS01208">
    <property type="entry name" value="VWFC_1"/>
    <property type="match status" value="2"/>
</dbReference>
<dbReference type="PROSITE" id="PS50184">
    <property type="entry name" value="VWFC_2"/>
    <property type="match status" value="2"/>
</dbReference>
<proteinExistence type="evidence at protein level"/>
<comment type="function">
    <text evidence="4 5 7">Putative negative growth factor (PubMed:7958919). Antagonist of dpp, a protein involved in patterning the dorsal region and in the development of the neuroectoderm; dpp inhibition is enhanced by tsg (PubMed:7958919). Required for establishment of a narrow stripe of peak levels of BMP signaling in the dorsal midline of early embryos, that will give rise to the amnioserosa (PubMed:11260716). During pupal development, plays a role in specification of the posterior crossvein in the wing (PubMed:15872004). Exhibits both agonist and antagonist activities towards BMP signaling during pupal wing patterning (PubMed:15872004).</text>
</comment>
<comment type="subunit">
    <text evidence="4 6">Component of a complex composed of dpp, sog and tsg (PubMed:11260716). Interacts with palmitoyltransferase Hip14 (PubMed:20599894).</text>
</comment>
<comment type="interaction">
    <interactant intactId="EBI-184947">
        <id>Q24025</id>
    </interactant>
    <interactant intactId="EBI-152934">
        <id>Q9VMV5</id>
        <label>vkg</label>
    </interactant>
    <organismsDiffer>false</organismsDiffer>
    <experiments>2</experiments>
</comment>
<comment type="subcellular location">
    <subcellularLocation>
        <location evidence="6">Golgi apparatus membrane</location>
        <topology evidence="8">Single-pass type II membrane protein</topology>
    </subcellularLocation>
    <subcellularLocation>
        <location evidence="6">Cell membrane</location>
        <topology evidence="8">Single-pass type I membrane protein</topology>
    </subcellularLocation>
    <subcellularLocation>
        <location evidence="6">Secreted</location>
    </subcellularLocation>
</comment>
<comment type="tissue specificity">
    <text evidence="7">Abuts the dorsal dpp-expressing cells in a lateral stripe 14-16 cells wide. Later in embryogenesis it is expressed in neuroectoderm and in the endoderm spaced along the anterior-posterior axis of the developing gut.</text>
</comment>
<comment type="developmental stage">
    <text evidence="7">Embryogenesis.</text>
</comment>
<comment type="PTM">
    <text evidence="6">Palmitoylated, probably by Hip14.</text>
</comment>
<comment type="PTM">
    <text evidence="5">Cleaved by metalloproteases tok and tld (PubMed:15872004). Cleavage by tok during pupal development contributes to specification of the posterior crossvein in the wing (PubMed:15872004).</text>
</comment>
<comment type="similarity">
    <text evidence="8">Belongs to the chordin family.</text>
</comment>
<protein>
    <recommendedName>
        <fullName>Dorsal-ventral patterning protein Sog</fullName>
    </recommendedName>
    <alternativeName>
        <fullName>Short gastrulation protein</fullName>
    </alternativeName>
</protein>
<sequence length="1038" mass="115515">MANKLRKSNAIEWATATGTVPLLERSCCHSEDAALEPQASKTSHREQAPILRHLSQLSHLLIIAGLLIVCLAGVTEGRRHAPLMFEESDTGRRSNRPAVTECQFGKVLRELGSTWYADLGPPFGVMYCIKCECVAIPKKRRIVARVQCRNIKNECPPAKCDDPISLPGKCCKTCPGDRNDTDVALDVPVPNEEEERNMKHYAALLTGRTSYFLKGEEMKSMYTTYNPQNVVATARFLFHKKNLYYSFYTSSRIGRPRAIQFVDDAGVILEEHQLETTLAGTLSVYQNATGKICGVWRRVPRDYKRILRDDRLHVVLLWGNKQQAELALAGKVAKYTALQTELFSSLLEAPLPDGKTDPQLAGAGGTAIVSTSSGAASSMHLTLVFNGVFGAEEYADAALSVKIELAERKEVIFDEIPRVRKPSAEINVLELSSPISIQNLRLMSRGKLLLTVESKKYPHLRIQGHIVTRASCEIFQTLLAPHSAESSTKSSGLAWVYLNTDGSLAYNIETEHVNTRDRPNISLIEEQGKRKAKLEDLTPSFNFNQAIGSVEKLGPKVLESLYAGELGVNVATEHETSLIRGRLVPRPVADARDSAEPILLKRQEHTDAQNPHAVGMAWMSIDNECNLHYEVTLNGVPAQDLQLYLEEKPIEAIGAPVTRKLLEEFNGSYLEGFFLSMPSAELIKLEMSVCYLEVHSKHSKQLLLRGKLKSTKVPGHCFPVYTDNNVPVPGDHNDNHLVNGETKCFHSGRFYNESEQWRSAQDSCQMCACLRGQSSCEVIKCPALKCKSTEQLLQRDGECCPSCVPKKEAADYSAQSSPATNATDLLQQRRGCRLGEQFHPAGASWHPFLPPNGFDTCTTCSCDPLTLEIRCPRLVCPPLQCSEKLAYRPDKKACCKICPEGKQSSSNGHKTTPNNPNVLQDQAMQRSPSHSAEEVLANGGCKVVNKVYENGQEWHPILMSHGEQKCIKCRCKDSKVNCDRKRCSRSTCQQQTRVTSKRRLFEKPDAAAPAIDECCSTQCRRSRRHHKRQPHHQQRSSS</sequence>
<feature type="chain" id="PRO_0000219089" description="Dorsal-ventral patterning protein Sog">
    <location>
        <begin position="1"/>
        <end position="1038"/>
    </location>
</feature>
<feature type="topological domain" description="Cytoplasmic" evidence="1">
    <location>
        <begin position="1"/>
        <end position="53"/>
    </location>
</feature>
<feature type="transmembrane region" description="Helical; Signal-anchor for type II membrane protein" evidence="1">
    <location>
        <begin position="54"/>
        <end position="74"/>
    </location>
</feature>
<feature type="topological domain" description="Extracellular" evidence="1">
    <location>
        <begin position="75"/>
        <end position="1038"/>
    </location>
</feature>
<feature type="domain" description="VWFC 1" evidence="2">
    <location>
        <begin position="100"/>
        <end position="175"/>
    </location>
</feature>
<feature type="domain" description="CHRD 1" evidence="3">
    <location>
        <begin position="197"/>
        <end position="337"/>
    </location>
</feature>
<feature type="domain" description="CHRD 2" evidence="3">
    <location>
        <begin position="339"/>
        <end position="471"/>
    </location>
</feature>
<feature type="domain" description="CHRD 3" evidence="3">
    <location>
        <begin position="474"/>
        <end position="588"/>
    </location>
</feature>
<feature type="domain" description="CHRD 4" evidence="3">
    <location>
        <begin position="592"/>
        <end position="713"/>
    </location>
</feature>
<feature type="domain" description="VWFC 2" evidence="2">
    <location>
        <begin position="742"/>
        <end position="804"/>
    </location>
</feature>
<feature type="domain" description="VWFC 3" evidence="2">
    <location>
        <begin position="830"/>
        <end position="899"/>
    </location>
</feature>
<feature type="domain" description="VWFC 4" evidence="2">
    <location>
        <begin position="939"/>
        <end position="1020"/>
    </location>
</feature>
<feature type="glycosylation site" description="N-linked (GlcNAc...) asparagine" evidence="1">
    <location>
        <position position="179"/>
    </location>
</feature>
<feature type="glycosylation site" description="N-linked (GlcNAc...) asparagine" evidence="1">
    <location>
        <position position="287"/>
    </location>
</feature>
<feature type="glycosylation site" description="N-linked (GlcNAc...) asparagine" evidence="1">
    <location>
        <position position="520"/>
    </location>
</feature>
<feature type="glycosylation site" description="N-linked (GlcNAc...) asparagine" evidence="1">
    <location>
        <position position="666"/>
    </location>
</feature>
<feature type="glycosylation site" description="N-linked (GlcNAc...) asparagine" evidence="1">
    <location>
        <position position="752"/>
    </location>
</feature>
<feature type="glycosylation site" description="N-linked (GlcNAc...) asparagine" evidence="1">
    <location>
        <position position="821"/>
    </location>
</feature>
<feature type="mutagenesis site" description="No change in baseline secretion but eliminates increased secretion normally caused by coexpression with Hip14 and reduces intracellular levels of Sog." evidence="6">
    <original>C</original>
    <variation>S</variation>
    <location>
        <position position="27"/>
    </location>
</feature>
<feature type="mutagenesis site" description="No effect on secretion when coexpressed with Hip14." evidence="6">
    <original>C</original>
    <variation>S</variation>
    <location>
        <position position="28"/>
    </location>
</feature>
<evidence type="ECO:0000255" key="1"/>
<evidence type="ECO:0000255" key="2">
    <source>
        <dbReference type="PROSITE-ProRule" id="PRU00220"/>
    </source>
</evidence>
<evidence type="ECO:0000255" key="3">
    <source>
        <dbReference type="PROSITE-ProRule" id="PRU00230"/>
    </source>
</evidence>
<evidence type="ECO:0000269" key="4">
    <source>
    </source>
</evidence>
<evidence type="ECO:0000269" key="5">
    <source>
    </source>
</evidence>
<evidence type="ECO:0000269" key="6">
    <source>
    </source>
</evidence>
<evidence type="ECO:0000269" key="7">
    <source>
    </source>
</evidence>
<evidence type="ECO:0000305" key="8"/>
<gene>
    <name type="primary">sog</name>
    <name type="ORF">CG9224</name>
</gene>
<accession>Q24025</accession>
<accession>B7FNI9</accession>
<accession>Q9VXS7</accession>